<proteinExistence type="inferred from homology"/>
<feature type="chain" id="PRO_1000139597" description="CTP synthase">
    <location>
        <begin position="1"/>
        <end position="577"/>
    </location>
</feature>
<feature type="domain" description="Glutamine amidotransferase type-1" evidence="1">
    <location>
        <begin position="333"/>
        <end position="575"/>
    </location>
</feature>
<feature type="region of interest" description="Amidoligase domain" evidence="1">
    <location>
        <begin position="1"/>
        <end position="268"/>
    </location>
</feature>
<feature type="active site" description="Nucleophile; for glutamine hydrolysis" evidence="1">
    <location>
        <position position="423"/>
    </location>
</feature>
<feature type="active site" evidence="1">
    <location>
        <position position="548"/>
    </location>
</feature>
<feature type="active site" evidence="1">
    <location>
        <position position="550"/>
    </location>
</feature>
<feature type="binding site" evidence="1">
    <location>
        <position position="14"/>
    </location>
    <ligand>
        <name>CTP</name>
        <dbReference type="ChEBI" id="CHEBI:37563"/>
        <note>allosteric inhibitor</note>
    </ligand>
</feature>
<feature type="binding site" evidence="1">
    <location>
        <position position="14"/>
    </location>
    <ligand>
        <name>UTP</name>
        <dbReference type="ChEBI" id="CHEBI:46398"/>
    </ligand>
</feature>
<feature type="binding site" evidence="1">
    <location>
        <begin position="15"/>
        <end position="20"/>
    </location>
    <ligand>
        <name>ATP</name>
        <dbReference type="ChEBI" id="CHEBI:30616"/>
    </ligand>
</feature>
<feature type="binding site" evidence="1">
    <location>
        <position position="55"/>
    </location>
    <ligand>
        <name>L-glutamine</name>
        <dbReference type="ChEBI" id="CHEBI:58359"/>
    </ligand>
</feature>
<feature type="binding site" evidence="1">
    <location>
        <position position="72"/>
    </location>
    <ligand>
        <name>ATP</name>
        <dbReference type="ChEBI" id="CHEBI:30616"/>
    </ligand>
</feature>
<feature type="binding site" evidence="1">
    <location>
        <position position="72"/>
    </location>
    <ligand>
        <name>Mg(2+)</name>
        <dbReference type="ChEBI" id="CHEBI:18420"/>
    </ligand>
</feature>
<feature type="binding site" evidence="1">
    <location>
        <position position="142"/>
    </location>
    <ligand>
        <name>Mg(2+)</name>
        <dbReference type="ChEBI" id="CHEBI:18420"/>
    </ligand>
</feature>
<feature type="binding site" evidence="1">
    <location>
        <begin position="149"/>
        <end position="151"/>
    </location>
    <ligand>
        <name>CTP</name>
        <dbReference type="ChEBI" id="CHEBI:37563"/>
        <note>allosteric inhibitor</note>
    </ligand>
</feature>
<feature type="binding site" evidence="1">
    <location>
        <begin position="189"/>
        <end position="194"/>
    </location>
    <ligand>
        <name>CTP</name>
        <dbReference type="ChEBI" id="CHEBI:37563"/>
        <note>allosteric inhibitor</note>
    </ligand>
</feature>
<feature type="binding site" evidence="1">
    <location>
        <begin position="189"/>
        <end position="194"/>
    </location>
    <ligand>
        <name>UTP</name>
        <dbReference type="ChEBI" id="CHEBI:46398"/>
    </ligand>
</feature>
<feature type="binding site" evidence="1">
    <location>
        <position position="225"/>
    </location>
    <ligand>
        <name>CTP</name>
        <dbReference type="ChEBI" id="CHEBI:37563"/>
        <note>allosteric inhibitor</note>
    </ligand>
</feature>
<feature type="binding site" evidence="1">
    <location>
        <position position="225"/>
    </location>
    <ligand>
        <name>UTP</name>
        <dbReference type="ChEBI" id="CHEBI:46398"/>
    </ligand>
</feature>
<feature type="binding site" evidence="1">
    <location>
        <position position="396"/>
    </location>
    <ligand>
        <name>L-glutamine</name>
        <dbReference type="ChEBI" id="CHEBI:58359"/>
    </ligand>
</feature>
<feature type="binding site" evidence="1">
    <location>
        <begin position="424"/>
        <end position="427"/>
    </location>
    <ligand>
        <name>L-glutamine</name>
        <dbReference type="ChEBI" id="CHEBI:58359"/>
    </ligand>
</feature>
<feature type="binding site" evidence="1">
    <location>
        <position position="447"/>
    </location>
    <ligand>
        <name>L-glutamine</name>
        <dbReference type="ChEBI" id="CHEBI:58359"/>
    </ligand>
</feature>
<feature type="binding site" evidence="1">
    <location>
        <position position="503"/>
    </location>
    <ligand>
        <name>L-glutamine</name>
        <dbReference type="ChEBI" id="CHEBI:58359"/>
    </ligand>
</feature>
<accession>B2S2Q3</accession>
<organism>
    <name type="scientific">Treponema pallidum subsp. pallidum (strain SS14)</name>
    <dbReference type="NCBI Taxonomy" id="455434"/>
    <lineage>
        <taxon>Bacteria</taxon>
        <taxon>Pseudomonadati</taxon>
        <taxon>Spirochaetota</taxon>
        <taxon>Spirochaetia</taxon>
        <taxon>Spirochaetales</taxon>
        <taxon>Treponemataceae</taxon>
        <taxon>Treponema</taxon>
    </lineage>
</organism>
<name>PYRG_TREPS</name>
<evidence type="ECO:0000255" key="1">
    <source>
        <dbReference type="HAMAP-Rule" id="MF_01227"/>
    </source>
</evidence>
<keyword id="KW-0067">ATP-binding</keyword>
<keyword id="KW-0315">Glutamine amidotransferase</keyword>
<keyword id="KW-0436">Ligase</keyword>
<keyword id="KW-0460">Magnesium</keyword>
<keyword id="KW-0479">Metal-binding</keyword>
<keyword id="KW-0547">Nucleotide-binding</keyword>
<keyword id="KW-0665">Pyrimidine biosynthesis</keyword>
<reference key="1">
    <citation type="journal article" date="2008" name="BMC Microbiol.">
        <title>Complete genome sequence of Treponema pallidum ssp. pallidum strain SS14 determined with oligonucleotide arrays.</title>
        <authorList>
            <person name="Matejkova P."/>
            <person name="Strouhal M."/>
            <person name="Smajs D."/>
            <person name="Norris S.J."/>
            <person name="Palzkill T."/>
            <person name="Petrosino J.F."/>
            <person name="Sodergren E."/>
            <person name="Norton J.E."/>
            <person name="Singh J."/>
            <person name="Richmond T.A."/>
            <person name="Molla M.N."/>
            <person name="Albert T.J."/>
            <person name="Weinstock G.M."/>
        </authorList>
    </citation>
    <scope>NUCLEOTIDE SEQUENCE [LARGE SCALE GENOMIC DNA]</scope>
    <source>
        <strain>SS14</strain>
    </source>
</reference>
<gene>
    <name evidence="1" type="primary">pyrG</name>
    <name type="ordered locus">TPASS_0305</name>
</gene>
<protein>
    <recommendedName>
        <fullName evidence="1">CTP synthase</fullName>
        <ecNumber evidence="1">6.3.4.2</ecNumber>
    </recommendedName>
    <alternativeName>
        <fullName evidence="1">Cytidine 5'-triphosphate synthase</fullName>
    </alternativeName>
    <alternativeName>
        <fullName evidence="1">Cytidine triphosphate synthetase</fullName>
        <shortName evidence="1">CTP synthetase</shortName>
        <shortName evidence="1">CTPS</shortName>
    </alternativeName>
    <alternativeName>
        <fullName evidence="1">UTP--ammonia ligase</fullName>
    </alternativeName>
</protein>
<comment type="function">
    <text evidence="1">Catalyzes the ATP-dependent amination of UTP to CTP with either L-glutamine or ammonia as the source of nitrogen. Regulates intracellular CTP levels through interactions with the four ribonucleotide triphosphates.</text>
</comment>
<comment type="catalytic activity">
    <reaction evidence="1">
        <text>UTP + L-glutamine + ATP + H2O = CTP + L-glutamate + ADP + phosphate + 2 H(+)</text>
        <dbReference type="Rhea" id="RHEA:26426"/>
        <dbReference type="ChEBI" id="CHEBI:15377"/>
        <dbReference type="ChEBI" id="CHEBI:15378"/>
        <dbReference type="ChEBI" id="CHEBI:29985"/>
        <dbReference type="ChEBI" id="CHEBI:30616"/>
        <dbReference type="ChEBI" id="CHEBI:37563"/>
        <dbReference type="ChEBI" id="CHEBI:43474"/>
        <dbReference type="ChEBI" id="CHEBI:46398"/>
        <dbReference type="ChEBI" id="CHEBI:58359"/>
        <dbReference type="ChEBI" id="CHEBI:456216"/>
        <dbReference type="EC" id="6.3.4.2"/>
    </reaction>
</comment>
<comment type="catalytic activity">
    <reaction evidence="1">
        <text>L-glutamine + H2O = L-glutamate + NH4(+)</text>
        <dbReference type="Rhea" id="RHEA:15889"/>
        <dbReference type="ChEBI" id="CHEBI:15377"/>
        <dbReference type="ChEBI" id="CHEBI:28938"/>
        <dbReference type="ChEBI" id="CHEBI:29985"/>
        <dbReference type="ChEBI" id="CHEBI:58359"/>
    </reaction>
</comment>
<comment type="catalytic activity">
    <reaction evidence="1">
        <text>UTP + NH4(+) + ATP = CTP + ADP + phosphate + 2 H(+)</text>
        <dbReference type="Rhea" id="RHEA:16597"/>
        <dbReference type="ChEBI" id="CHEBI:15378"/>
        <dbReference type="ChEBI" id="CHEBI:28938"/>
        <dbReference type="ChEBI" id="CHEBI:30616"/>
        <dbReference type="ChEBI" id="CHEBI:37563"/>
        <dbReference type="ChEBI" id="CHEBI:43474"/>
        <dbReference type="ChEBI" id="CHEBI:46398"/>
        <dbReference type="ChEBI" id="CHEBI:456216"/>
    </reaction>
</comment>
<comment type="activity regulation">
    <text evidence="1">Allosterically activated by GTP, when glutamine is the substrate; GTP has no effect on the reaction when ammonia is the substrate. The allosteric effector GTP functions by stabilizing the protein conformation that binds the tetrahedral intermediate(s) formed during glutamine hydrolysis. Inhibited by the product CTP, via allosteric rather than competitive inhibition.</text>
</comment>
<comment type="pathway">
    <text evidence="1">Pyrimidine metabolism; CTP biosynthesis via de novo pathway; CTP from UDP: step 2/2.</text>
</comment>
<comment type="subunit">
    <text evidence="1">Homotetramer.</text>
</comment>
<comment type="miscellaneous">
    <text evidence="1">CTPSs have evolved a hybrid strategy for distinguishing between UTP and CTP. The overlapping regions of the product feedback inhibitory and substrate sites recognize a common feature in both compounds, the triphosphate moiety. To differentiate isosteric substrate and product pyrimidine rings, an additional pocket far from the expected kinase/ligase catalytic site, specifically recognizes the cytosine and ribose portions of the product inhibitor.</text>
</comment>
<comment type="similarity">
    <text evidence="1">Belongs to the CTP synthase family.</text>
</comment>
<sequence length="577" mass="62147">MDPAFIFITGGVVSSLGKGIAAGAIGLLLKSRGISVVNQKFDPYLNGDPGTMNPYQHGEVFVTQDGGETDLDLGHYERFTDVPSSRFNSTTAGSVYRAILDRERAGGYGGATVQVIPHVTDEIQARIRAAAATTGARVVITEIGGTVGDIESLPFIEAIRQIRRVLGKERCLFIHLGLVPYLPSCGEMKTKPLQHSVKELLGLGVQPDVILCRSERHITDAVREKLSLFCNVERRAIVENVTARSIYEVPLLLEAEGLGALLCERLRLFDTCCGGQVARNLGAGGAQSAVLGAGGTVRTDGGLHPAAGQGAEPDLTAWRAMVRALYYPRRELTVALVGKYVSLADAYLSVSEALTAAGICHRARVDMRWIDAEEICSVQDAGHALADADALVIPGGFGVRGIEGMICAVSHARVQNLPYLGICLGMQIAVIEFARNVLLLASAHSREFAVDTPHPVVDLLPGCVDTPTGGSLRLGQYRCLLAEGSRARALYGRGEVWERHRHRYGLNAAYRARFEASALRPVGVDSDCGAVEVVEHGEHPWFFGVQFHPEFCSRPNRAHPLFRALVAAGLERKDSRS</sequence>
<dbReference type="EC" id="6.3.4.2" evidence="1"/>
<dbReference type="EMBL" id="CP000805">
    <property type="protein sequence ID" value="ACD70732.1"/>
    <property type="molecule type" value="Genomic_DNA"/>
</dbReference>
<dbReference type="RefSeq" id="WP_010881754.1">
    <property type="nucleotide sequence ID" value="NC_021508.1"/>
</dbReference>
<dbReference type="SMR" id="B2S2Q3"/>
<dbReference type="MEROPS" id="C26.964"/>
<dbReference type="KEGG" id="tpp:TPASS_0305"/>
<dbReference type="PATRIC" id="fig|455434.6.peg.307"/>
<dbReference type="UniPathway" id="UPA00159">
    <property type="reaction ID" value="UER00277"/>
</dbReference>
<dbReference type="Proteomes" id="UP000001202">
    <property type="component" value="Chromosome"/>
</dbReference>
<dbReference type="GO" id="GO:0005829">
    <property type="term" value="C:cytosol"/>
    <property type="evidence" value="ECO:0007669"/>
    <property type="project" value="TreeGrafter"/>
</dbReference>
<dbReference type="GO" id="GO:0005524">
    <property type="term" value="F:ATP binding"/>
    <property type="evidence" value="ECO:0007669"/>
    <property type="project" value="UniProtKB-KW"/>
</dbReference>
<dbReference type="GO" id="GO:0003883">
    <property type="term" value="F:CTP synthase activity"/>
    <property type="evidence" value="ECO:0007669"/>
    <property type="project" value="UniProtKB-UniRule"/>
</dbReference>
<dbReference type="GO" id="GO:0004359">
    <property type="term" value="F:glutaminase activity"/>
    <property type="evidence" value="ECO:0007669"/>
    <property type="project" value="RHEA"/>
</dbReference>
<dbReference type="GO" id="GO:0042802">
    <property type="term" value="F:identical protein binding"/>
    <property type="evidence" value="ECO:0007669"/>
    <property type="project" value="TreeGrafter"/>
</dbReference>
<dbReference type="GO" id="GO:0046872">
    <property type="term" value="F:metal ion binding"/>
    <property type="evidence" value="ECO:0007669"/>
    <property type="project" value="UniProtKB-KW"/>
</dbReference>
<dbReference type="GO" id="GO:0044210">
    <property type="term" value="P:'de novo' CTP biosynthetic process"/>
    <property type="evidence" value="ECO:0007669"/>
    <property type="project" value="UniProtKB-UniRule"/>
</dbReference>
<dbReference type="GO" id="GO:0019856">
    <property type="term" value="P:pyrimidine nucleobase biosynthetic process"/>
    <property type="evidence" value="ECO:0007669"/>
    <property type="project" value="TreeGrafter"/>
</dbReference>
<dbReference type="CDD" id="cd03113">
    <property type="entry name" value="CTPS_N"/>
    <property type="match status" value="1"/>
</dbReference>
<dbReference type="CDD" id="cd01746">
    <property type="entry name" value="GATase1_CTP_Synthase"/>
    <property type="match status" value="1"/>
</dbReference>
<dbReference type="FunFam" id="3.40.50.300:FF:000009">
    <property type="entry name" value="CTP synthase"/>
    <property type="match status" value="1"/>
</dbReference>
<dbReference type="FunFam" id="3.40.50.880:FF:000002">
    <property type="entry name" value="CTP synthase"/>
    <property type="match status" value="1"/>
</dbReference>
<dbReference type="Gene3D" id="3.40.50.880">
    <property type="match status" value="1"/>
</dbReference>
<dbReference type="Gene3D" id="3.40.50.300">
    <property type="entry name" value="P-loop containing nucleotide triphosphate hydrolases"/>
    <property type="match status" value="1"/>
</dbReference>
<dbReference type="HAMAP" id="MF_01227">
    <property type="entry name" value="PyrG"/>
    <property type="match status" value="1"/>
</dbReference>
<dbReference type="InterPro" id="IPR029062">
    <property type="entry name" value="Class_I_gatase-like"/>
</dbReference>
<dbReference type="InterPro" id="IPR004468">
    <property type="entry name" value="CTP_synthase"/>
</dbReference>
<dbReference type="InterPro" id="IPR017456">
    <property type="entry name" value="CTP_synthase_N"/>
</dbReference>
<dbReference type="InterPro" id="IPR017926">
    <property type="entry name" value="GATASE"/>
</dbReference>
<dbReference type="InterPro" id="IPR033828">
    <property type="entry name" value="GATase1_CTP_Synthase"/>
</dbReference>
<dbReference type="InterPro" id="IPR027417">
    <property type="entry name" value="P-loop_NTPase"/>
</dbReference>
<dbReference type="NCBIfam" id="NF003792">
    <property type="entry name" value="PRK05380.1"/>
    <property type="match status" value="1"/>
</dbReference>
<dbReference type="NCBIfam" id="TIGR00337">
    <property type="entry name" value="PyrG"/>
    <property type="match status" value="1"/>
</dbReference>
<dbReference type="PANTHER" id="PTHR11550">
    <property type="entry name" value="CTP SYNTHASE"/>
    <property type="match status" value="1"/>
</dbReference>
<dbReference type="PANTHER" id="PTHR11550:SF0">
    <property type="entry name" value="CTP SYNTHASE-RELATED"/>
    <property type="match status" value="1"/>
</dbReference>
<dbReference type="Pfam" id="PF06418">
    <property type="entry name" value="CTP_synth_N"/>
    <property type="match status" value="1"/>
</dbReference>
<dbReference type="Pfam" id="PF00117">
    <property type="entry name" value="GATase"/>
    <property type="match status" value="1"/>
</dbReference>
<dbReference type="SUPFAM" id="SSF52317">
    <property type="entry name" value="Class I glutamine amidotransferase-like"/>
    <property type="match status" value="1"/>
</dbReference>
<dbReference type="SUPFAM" id="SSF52540">
    <property type="entry name" value="P-loop containing nucleoside triphosphate hydrolases"/>
    <property type="match status" value="1"/>
</dbReference>
<dbReference type="PROSITE" id="PS51273">
    <property type="entry name" value="GATASE_TYPE_1"/>
    <property type="match status" value="1"/>
</dbReference>